<proteinExistence type="evidence at transcript level"/>
<comment type="function">
    <text evidence="1 2">May act as an oxidative stress mediator by inhibiting thioredoxin activity or by limiting its bioavailability (By similarity). Interacts with COPS5 and restores COPS5-induced suppression of CDKN1B stability, blocking the COPS5-mediated translocation of CDKN1B from the nucleus to the cytoplasm (By similarity). Functions as a transcriptional repressor, possibly by acting as a bridge molecule between transcription factors and corepressor complexes, and over-expression will induce G0/G1 cell cycle arrest (By similarity). Required for the maturation of natural killer cells (By similarity). Acts as a suppressor of tumor cell growth. Inhibits the proteasomal degradation of DDIT4, and thereby contributes to the inhibition of the mammalian target of rapamycin complex 1 (mTORC1) (By similarity).</text>
</comment>
<comment type="subunit">
    <text evidence="2">Homodimer; disulfide-linked. Interacts with TXN/thioredoxin through its redox-active site. Interacts with transcriptional repressors ZBTB16, ZBTB32 and HDAC1. Interacts with DDIT4.</text>
</comment>
<comment type="subcellular location">
    <subcellularLocation>
        <location evidence="1">Cytoplasm</location>
    </subcellularLocation>
</comment>
<comment type="PTM">
    <text evidence="2">Ubiquitinated; undergoes heterotypic 'Lys-48'-/'Lys-63'-branched polyubiquitination catalyzed by ITCH and UBR5 resulting in proteasomal degradation. Deubiquitinated by USP5, leading to TXNIP stabilization.</text>
</comment>
<comment type="similarity">
    <text evidence="3">Belongs to the arrestin family.</text>
</comment>
<sequence length="394" mass="44018">MVMFKKIKSFEVVFNDPEKVYGSGEKVAGRVTVEVCEVTRVKAVRILACGVAKVLWMQGSQQCKQTLDYLRYEDTLLLEDQPTGENEMVIMRPGNKYEYKFGFELPQGPLGTSFKGKYGCVDYWVKAFLDRPSQPTQEAKKNFEVMDLVDVNTPDLMAPVSAKKEKKVSCMFIPDGRVSVSARIDRKGFCEGDDISIHADFENTCSRIVVPKAAIVARHTYLANGQTKVLTQKLSSVRGNHIISGTCASWRGKSLRVQKIRPSILGCNILRVEYSLLIYVSVPGSKKVILDLPLVIGSRSGLSSRTSSMASRTSSEMSWIDLNIPDTPEAPPCYMDVIPEDHRLESPTTPLLDDVDDSQDSPIFMYAPEFQFMPPPTYTEVDPCVLNNNNNNVQ</sequence>
<keyword id="KW-0131">Cell cycle</keyword>
<keyword id="KW-0963">Cytoplasm</keyword>
<keyword id="KW-1015">Disulfide bond</keyword>
<keyword id="KW-1017">Isopeptide bond</keyword>
<keyword id="KW-0597">Phosphoprotein</keyword>
<keyword id="KW-1185">Reference proteome</keyword>
<keyword id="KW-0804">Transcription</keyword>
<keyword id="KW-0805">Transcription regulation</keyword>
<keyword id="KW-0043">Tumor suppressor</keyword>
<keyword id="KW-0832">Ubl conjugation</keyword>
<dbReference type="EMBL" id="BC088411">
    <property type="protein sequence ID" value="AAH88411.1"/>
    <property type="molecule type" value="mRNA"/>
</dbReference>
<dbReference type="RefSeq" id="NP_001008767.1">
    <property type="nucleotide sequence ID" value="NM_001008767.2"/>
</dbReference>
<dbReference type="SMR" id="Q5M7W1"/>
<dbReference type="BioGRID" id="250736">
    <property type="interactions" value="2"/>
</dbReference>
<dbReference type="CORUM" id="Q5M7W1"/>
<dbReference type="FunCoup" id="Q5M7W1">
    <property type="interactions" value="410"/>
</dbReference>
<dbReference type="IntAct" id="Q5M7W1">
    <property type="interactions" value="1"/>
</dbReference>
<dbReference type="STRING" id="10116.ENSRNOP00000028793"/>
<dbReference type="GlyGen" id="Q5M7W1">
    <property type="glycosylation" value="1 site, 1 O-linked glycan (1 site)"/>
</dbReference>
<dbReference type="iPTMnet" id="Q5M7W1"/>
<dbReference type="PhosphoSitePlus" id="Q5M7W1"/>
<dbReference type="PaxDb" id="10116-ENSRNOP00000028793"/>
<dbReference type="Ensembl" id="ENSRNOT00000028793.7">
    <property type="protein sequence ID" value="ENSRNOP00000028793.5"/>
    <property type="gene ID" value="ENSRNOG00000021201.8"/>
</dbReference>
<dbReference type="GeneID" id="117514"/>
<dbReference type="KEGG" id="rno:117514"/>
<dbReference type="UCSC" id="RGD:620886">
    <property type="organism name" value="rat"/>
</dbReference>
<dbReference type="AGR" id="RGD:620886"/>
<dbReference type="CTD" id="10628"/>
<dbReference type="RGD" id="620886">
    <property type="gene designation" value="Txnip"/>
</dbReference>
<dbReference type="eggNOG" id="KOG3780">
    <property type="taxonomic scope" value="Eukaryota"/>
</dbReference>
<dbReference type="GeneTree" id="ENSGT00940000158522"/>
<dbReference type="HOGENOM" id="CLU_039221_1_1_1"/>
<dbReference type="InParanoid" id="Q5M7W1"/>
<dbReference type="OMA" id="TKKYFEV"/>
<dbReference type="OrthoDB" id="2333384at2759"/>
<dbReference type="PhylomeDB" id="Q5M7W1"/>
<dbReference type="Reactome" id="R-RNO-844456">
    <property type="pathway name" value="The NLRP3 inflammasome"/>
</dbReference>
<dbReference type="PRO" id="PR:Q5M7W1"/>
<dbReference type="Proteomes" id="UP000002494">
    <property type="component" value="Chromosome 2"/>
</dbReference>
<dbReference type="Bgee" id="ENSRNOG00000021201">
    <property type="expression patterns" value="Expressed in lung and 20 other cell types or tissues"/>
</dbReference>
<dbReference type="GO" id="GO:0005737">
    <property type="term" value="C:cytoplasm"/>
    <property type="evidence" value="ECO:0000266"/>
    <property type="project" value="RGD"/>
</dbReference>
<dbReference type="GO" id="GO:0004857">
    <property type="term" value="F:enzyme inhibitor activity"/>
    <property type="evidence" value="ECO:0000266"/>
    <property type="project" value="RGD"/>
</dbReference>
<dbReference type="GO" id="GO:0031625">
    <property type="term" value="F:ubiquitin protein ligase binding"/>
    <property type="evidence" value="ECO:0000266"/>
    <property type="project" value="RGD"/>
</dbReference>
<dbReference type="GO" id="GO:0071228">
    <property type="term" value="P:cellular response to tumor cell"/>
    <property type="evidence" value="ECO:0000250"/>
    <property type="project" value="UniProtKB"/>
</dbReference>
<dbReference type="GO" id="GO:0030216">
    <property type="term" value="P:keratinocyte differentiation"/>
    <property type="evidence" value="ECO:0000266"/>
    <property type="project" value="RGD"/>
</dbReference>
<dbReference type="GO" id="GO:0051782">
    <property type="term" value="P:negative regulation of cell division"/>
    <property type="evidence" value="ECO:0000250"/>
    <property type="project" value="UniProtKB"/>
</dbReference>
<dbReference type="GO" id="GO:0000122">
    <property type="term" value="P:negative regulation of transcription by RNA polymerase II"/>
    <property type="evidence" value="ECO:0000266"/>
    <property type="project" value="RGD"/>
</dbReference>
<dbReference type="GO" id="GO:0048008">
    <property type="term" value="P:platelet-derived growth factor receptor signaling pathway"/>
    <property type="evidence" value="ECO:0000266"/>
    <property type="project" value="RGD"/>
</dbReference>
<dbReference type="GO" id="GO:0043065">
    <property type="term" value="P:positive regulation of apoptotic process"/>
    <property type="evidence" value="ECO:0000315"/>
    <property type="project" value="RGD"/>
</dbReference>
<dbReference type="GO" id="GO:0006606">
    <property type="term" value="P:protein import into nucleus"/>
    <property type="evidence" value="ECO:0000266"/>
    <property type="project" value="RGD"/>
</dbReference>
<dbReference type="GO" id="GO:0015031">
    <property type="term" value="P:protein transport"/>
    <property type="evidence" value="ECO:0000318"/>
    <property type="project" value="GO_Central"/>
</dbReference>
<dbReference type="GO" id="GO:0042127">
    <property type="term" value="P:regulation of cell population proliferation"/>
    <property type="evidence" value="ECO:0000314"/>
    <property type="project" value="RGD"/>
</dbReference>
<dbReference type="GO" id="GO:0051592">
    <property type="term" value="P:response to calcium ion"/>
    <property type="evidence" value="ECO:0000270"/>
    <property type="project" value="RGD"/>
</dbReference>
<dbReference type="GO" id="GO:0032355">
    <property type="term" value="P:response to estradiol"/>
    <property type="evidence" value="ECO:0000270"/>
    <property type="project" value="RGD"/>
</dbReference>
<dbReference type="GO" id="GO:0009749">
    <property type="term" value="P:response to glucose"/>
    <property type="evidence" value="ECO:0000270"/>
    <property type="project" value="RGD"/>
</dbReference>
<dbReference type="GO" id="GO:0042542">
    <property type="term" value="P:response to hydrogen peroxide"/>
    <property type="evidence" value="ECO:0000270"/>
    <property type="project" value="RGD"/>
</dbReference>
<dbReference type="GO" id="GO:0009612">
    <property type="term" value="P:response to mechanical stimulus"/>
    <property type="evidence" value="ECO:0000270"/>
    <property type="project" value="RGD"/>
</dbReference>
<dbReference type="GO" id="GO:0006979">
    <property type="term" value="P:response to oxidative stress"/>
    <property type="evidence" value="ECO:0000266"/>
    <property type="project" value="RGD"/>
</dbReference>
<dbReference type="GO" id="GO:0032570">
    <property type="term" value="P:response to progesterone"/>
    <property type="evidence" value="ECO:0000270"/>
    <property type="project" value="RGD"/>
</dbReference>
<dbReference type="GO" id="GO:0009410">
    <property type="term" value="P:response to xenobiotic stimulus"/>
    <property type="evidence" value="ECO:0000270"/>
    <property type="project" value="RGD"/>
</dbReference>
<dbReference type="FunFam" id="2.60.40.640:FF:000016">
    <property type="entry name" value="thioredoxin-interacting protein-like"/>
    <property type="match status" value="1"/>
</dbReference>
<dbReference type="FunFam" id="2.60.40.640:FF:000017">
    <property type="entry name" value="thioredoxin-interacting protein-like"/>
    <property type="match status" value="1"/>
</dbReference>
<dbReference type="Gene3D" id="2.60.40.640">
    <property type="match status" value="2"/>
</dbReference>
<dbReference type="InterPro" id="IPR014752">
    <property type="entry name" value="Arrestin-like_C"/>
</dbReference>
<dbReference type="InterPro" id="IPR011021">
    <property type="entry name" value="Arrestin-like_N"/>
</dbReference>
<dbReference type="InterPro" id="IPR011022">
    <property type="entry name" value="Arrestin_C-like"/>
</dbReference>
<dbReference type="InterPro" id="IPR050357">
    <property type="entry name" value="Arrestin_domain-protein"/>
</dbReference>
<dbReference type="InterPro" id="IPR014756">
    <property type="entry name" value="Ig_E-set"/>
</dbReference>
<dbReference type="PANTHER" id="PTHR11188">
    <property type="entry name" value="ARRESTIN DOMAIN CONTAINING PROTEIN"/>
    <property type="match status" value="1"/>
</dbReference>
<dbReference type="PANTHER" id="PTHR11188:SF14">
    <property type="entry name" value="THIOREDOXIN-INTERACTING PROTEIN"/>
    <property type="match status" value="1"/>
</dbReference>
<dbReference type="Pfam" id="PF02752">
    <property type="entry name" value="Arrestin_C"/>
    <property type="match status" value="1"/>
</dbReference>
<dbReference type="Pfam" id="PF00339">
    <property type="entry name" value="Arrestin_N"/>
    <property type="match status" value="1"/>
</dbReference>
<dbReference type="SMART" id="SM01017">
    <property type="entry name" value="Arrestin_C"/>
    <property type="match status" value="1"/>
</dbReference>
<dbReference type="SUPFAM" id="SSF81296">
    <property type="entry name" value="E set domains"/>
    <property type="match status" value="2"/>
</dbReference>
<name>TXNIP_RAT</name>
<feature type="chain" id="PRO_0000250493" description="Thioredoxin-interacting protein">
    <location>
        <begin position="1"/>
        <end position="394"/>
    </location>
</feature>
<feature type="modified residue" description="Phosphoserine" evidence="2">
    <location>
        <position position="361"/>
    </location>
</feature>
<feature type="disulfide bond" description="Interchain" evidence="2">
    <location>
        <position position="63"/>
    </location>
</feature>
<feature type="cross-link" description="Glycyl lysine isopeptide (Lys-Gly) (interchain with G-Cter in ubiquitin)" evidence="2">
    <location>
        <position position="212"/>
    </location>
</feature>
<accession>Q5M7W1</accession>
<reference key="1">
    <citation type="journal article" date="2004" name="Genome Res.">
        <title>The status, quality, and expansion of the NIH full-length cDNA project: the Mammalian Gene Collection (MGC).</title>
        <authorList>
            <consortium name="The MGC Project Team"/>
        </authorList>
    </citation>
    <scope>NUCLEOTIDE SEQUENCE [LARGE SCALE MRNA]</scope>
    <source>
        <tissue>Heart</tissue>
    </source>
</reference>
<organism>
    <name type="scientific">Rattus norvegicus</name>
    <name type="common">Rat</name>
    <dbReference type="NCBI Taxonomy" id="10116"/>
    <lineage>
        <taxon>Eukaryota</taxon>
        <taxon>Metazoa</taxon>
        <taxon>Chordata</taxon>
        <taxon>Craniata</taxon>
        <taxon>Vertebrata</taxon>
        <taxon>Euteleostomi</taxon>
        <taxon>Mammalia</taxon>
        <taxon>Eutheria</taxon>
        <taxon>Euarchontoglires</taxon>
        <taxon>Glires</taxon>
        <taxon>Rodentia</taxon>
        <taxon>Myomorpha</taxon>
        <taxon>Muroidea</taxon>
        <taxon>Muridae</taxon>
        <taxon>Murinae</taxon>
        <taxon>Rattus</taxon>
    </lineage>
</organism>
<evidence type="ECO:0000250" key="1">
    <source>
        <dbReference type="UniProtKB" id="Q8BG60"/>
    </source>
</evidence>
<evidence type="ECO:0000250" key="2">
    <source>
        <dbReference type="UniProtKB" id="Q9H3M7"/>
    </source>
</evidence>
<evidence type="ECO:0000305" key="3"/>
<gene>
    <name type="primary">Txnip</name>
    <name type="synonym">Vdup1</name>
</gene>
<protein>
    <recommendedName>
        <fullName>Thioredoxin-interacting protein</fullName>
    </recommendedName>
    <alternativeName>
        <fullName>Vitamin D3 up-regulated protein 1</fullName>
    </alternativeName>
</protein>